<comment type="function">
    <text evidence="1">This protein specifically catalyzes the removal of signal peptides from prolipoproteins.</text>
</comment>
<comment type="catalytic activity">
    <reaction evidence="1">
        <text>Release of signal peptides from bacterial membrane prolipoproteins. Hydrolyzes -Xaa-Yaa-Zaa-|-(S,diacylglyceryl)Cys-, in which Xaa is hydrophobic (preferably Leu), and Yaa (Ala or Ser) and Zaa (Gly or Ala) have small, neutral side chains.</text>
        <dbReference type="EC" id="3.4.23.36"/>
    </reaction>
</comment>
<comment type="pathway">
    <text evidence="1">Protein modification; lipoprotein biosynthesis (signal peptide cleavage).</text>
</comment>
<comment type="subcellular location">
    <subcellularLocation>
        <location evidence="1">Cell inner membrane</location>
        <topology evidence="1">Multi-pass membrane protein</topology>
    </subcellularLocation>
</comment>
<comment type="similarity">
    <text evidence="1">Belongs to the peptidase A8 family.</text>
</comment>
<accession>Q0BNB6</accession>
<organism>
    <name type="scientific">Francisella tularensis subsp. holarctica (strain OSU18)</name>
    <dbReference type="NCBI Taxonomy" id="393011"/>
    <lineage>
        <taxon>Bacteria</taxon>
        <taxon>Pseudomonadati</taxon>
        <taxon>Pseudomonadota</taxon>
        <taxon>Gammaproteobacteria</taxon>
        <taxon>Thiotrichales</taxon>
        <taxon>Francisellaceae</taxon>
        <taxon>Francisella</taxon>
    </lineage>
</organism>
<keyword id="KW-0064">Aspartyl protease</keyword>
<keyword id="KW-0997">Cell inner membrane</keyword>
<keyword id="KW-1003">Cell membrane</keyword>
<keyword id="KW-0378">Hydrolase</keyword>
<keyword id="KW-0472">Membrane</keyword>
<keyword id="KW-0645">Protease</keyword>
<keyword id="KW-0812">Transmembrane</keyword>
<keyword id="KW-1133">Transmembrane helix</keyword>
<feature type="chain" id="PRO_0000289380" description="Lipoprotein signal peptidase">
    <location>
        <begin position="1"/>
        <end position="161"/>
    </location>
</feature>
<feature type="transmembrane region" description="Helical" evidence="1">
    <location>
        <begin position="8"/>
        <end position="28"/>
    </location>
</feature>
<feature type="transmembrane region" description="Helical" evidence="1">
    <location>
        <begin position="40"/>
        <end position="60"/>
    </location>
</feature>
<feature type="transmembrane region" description="Helical" evidence="1">
    <location>
        <begin position="67"/>
        <end position="87"/>
    </location>
</feature>
<feature type="transmembrane region" description="Helical" evidence="1">
    <location>
        <begin position="91"/>
        <end position="111"/>
    </location>
</feature>
<feature type="transmembrane region" description="Helical" evidence="1">
    <location>
        <begin position="136"/>
        <end position="156"/>
    </location>
</feature>
<feature type="active site" evidence="1">
    <location>
        <position position="122"/>
    </location>
</feature>
<feature type="active site" evidence="1">
    <location>
        <position position="140"/>
    </location>
</feature>
<proteinExistence type="inferred from homology"/>
<dbReference type="EC" id="3.4.23.36" evidence="1"/>
<dbReference type="EMBL" id="CP000437">
    <property type="protein sequence ID" value="ABI82418.1"/>
    <property type="molecule type" value="Genomic_DNA"/>
</dbReference>
<dbReference type="RefSeq" id="WP_003014705.1">
    <property type="nucleotide sequence ID" value="NC_017463.1"/>
</dbReference>
<dbReference type="SMR" id="Q0BNB6"/>
<dbReference type="KEGG" id="fth:FTH_0427"/>
<dbReference type="UniPathway" id="UPA00665"/>
<dbReference type="GO" id="GO:0005886">
    <property type="term" value="C:plasma membrane"/>
    <property type="evidence" value="ECO:0007669"/>
    <property type="project" value="UniProtKB-SubCell"/>
</dbReference>
<dbReference type="GO" id="GO:0004190">
    <property type="term" value="F:aspartic-type endopeptidase activity"/>
    <property type="evidence" value="ECO:0007669"/>
    <property type="project" value="UniProtKB-UniRule"/>
</dbReference>
<dbReference type="GO" id="GO:0006508">
    <property type="term" value="P:proteolysis"/>
    <property type="evidence" value="ECO:0007669"/>
    <property type="project" value="UniProtKB-KW"/>
</dbReference>
<dbReference type="HAMAP" id="MF_00161">
    <property type="entry name" value="LspA"/>
    <property type="match status" value="1"/>
</dbReference>
<dbReference type="InterPro" id="IPR001872">
    <property type="entry name" value="Peptidase_A8"/>
</dbReference>
<dbReference type="NCBIfam" id="TIGR00077">
    <property type="entry name" value="lspA"/>
    <property type="match status" value="1"/>
</dbReference>
<dbReference type="PANTHER" id="PTHR33695">
    <property type="entry name" value="LIPOPROTEIN SIGNAL PEPTIDASE"/>
    <property type="match status" value="1"/>
</dbReference>
<dbReference type="PANTHER" id="PTHR33695:SF1">
    <property type="entry name" value="LIPOPROTEIN SIGNAL PEPTIDASE"/>
    <property type="match status" value="1"/>
</dbReference>
<dbReference type="Pfam" id="PF01252">
    <property type="entry name" value="Peptidase_A8"/>
    <property type="match status" value="1"/>
</dbReference>
<dbReference type="PRINTS" id="PR00781">
    <property type="entry name" value="LIPOSIGPTASE"/>
</dbReference>
<dbReference type="PROSITE" id="PS00855">
    <property type="entry name" value="SPASE_II"/>
    <property type="match status" value="1"/>
</dbReference>
<name>LSPA_FRATO</name>
<reference key="1">
    <citation type="journal article" date="2006" name="J. Bacteriol.">
        <title>Chromosome rearrangement and diversification of Francisella tularensis revealed by the type B (OSU18) genome sequence.</title>
        <authorList>
            <person name="Petrosino J.F."/>
            <person name="Xiang Q."/>
            <person name="Karpathy S.E."/>
            <person name="Jiang H."/>
            <person name="Yerrapragada S."/>
            <person name="Liu Y."/>
            <person name="Gioia J."/>
            <person name="Hemphill L."/>
            <person name="Gonzalez A."/>
            <person name="Raghavan T.M."/>
            <person name="Uzman A."/>
            <person name="Fox G.E."/>
            <person name="Highlander S."/>
            <person name="Reichard M."/>
            <person name="Morton R.J."/>
            <person name="Clinkenbeard K.D."/>
            <person name="Weinstock G.M."/>
        </authorList>
    </citation>
    <scope>NUCLEOTIDE SEQUENCE [LARGE SCALE GENOMIC DNA]</scope>
    <source>
        <strain>OSU18</strain>
    </source>
</reference>
<gene>
    <name evidence="1" type="primary">lspA</name>
    <name type="ordered locus">FTH_0427</name>
</gene>
<evidence type="ECO:0000255" key="1">
    <source>
        <dbReference type="HAMAP-Rule" id="MF_00161"/>
    </source>
</evidence>
<protein>
    <recommendedName>
        <fullName evidence="1">Lipoprotein signal peptidase</fullName>
        <ecNumber evidence="1">3.4.23.36</ecNumber>
    </recommendedName>
    <alternativeName>
        <fullName evidence="1">Prolipoprotein signal peptidase</fullName>
    </alternativeName>
    <alternativeName>
        <fullName evidence="1">Signal peptidase II</fullName>
        <shortName evidence="1">SPase II</shortName>
    </alternativeName>
</protein>
<sequence length="161" mass="18181">MNLLRPKLKYFILAILIIAADLYTKYLANTYLEFAQSLKITSFFNLTLLYNHGAAFSLLSNDQTSWQMIMFSTISLIAAIVLIYLIIKQPITEKINLFSFALILGGALGNFYDRAFQGYVIDFLDFHIGNYHWPSFNIADSAITCGVVILIAASLFTKKKS</sequence>